<proteinExistence type="inferred from homology"/>
<comment type="function">
    <text evidence="1">Cysteine desulfurases mobilize the sulfur from L-cysteine to yield L-alanine, an essential step in sulfur metabolism for biosynthesis of a variety of sulfur-containing biomolecules. Component of the suf operon, which is activated and required under specific conditions such as oxidative stress and iron limitation. Acts as a potent selenocysteine lyase in vitro, that mobilizes selenium from L-selenocysteine. Selenocysteine lyase activity is however unsure in vivo.</text>
</comment>
<comment type="catalytic activity">
    <reaction evidence="1">
        <text>(sulfur carrier)-H + L-cysteine = (sulfur carrier)-SH + L-alanine</text>
        <dbReference type="Rhea" id="RHEA:43892"/>
        <dbReference type="Rhea" id="RHEA-COMP:14737"/>
        <dbReference type="Rhea" id="RHEA-COMP:14739"/>
        <dbReference type="ChEBI" id="CHEBI:29917"/>
        <dbReference type="ChEBI" id="CHEBI:35235"/>
        <dbReference type="ChEBI" id="CHEBI:57972"/>
        <dbReference type="ChEBI" id="CHEBI:64428"/>
        <dbReference type="EC" id="2.8.1.7"/>
    </reaction>
</comment>
<comment type="catalytic activity">
    <reaction evidence="1">
        <text>L-selenocysteine + AH2 = hydrogenselenide + L-alanine + A + H(+)</text>
        <dbReference type="Rhea" id="RHEA:11632"/>
        <dbReference type="ChEBI" id="CHEBI:13193"/>
        <dbReference type="ChEBI" id="CHEBI:15378"/>
        <dbReference type="ChEBI" id="CHEBI:17499"/>
        <dbReference type="ChEBI" id="CHEBI:29317"/>
        <dbReference type="ChEBI" id="CHEBI:57843"/>
        <dbReference type="ChEBI" id="CHEBI:57972"/>
        <dbReference type="EC" id="4.4.1.16"/>
    </reaction>
</comment>
<comment type="cofactor">
    <cofactor evidence="1">
        <name>pyridoxal 5'-phosphate</name>
        <dbReference type="ChEBI" id="CHEBI:597326"/>
    </cofactor>
</comment>
<comment type="pathway">
    <text evidence="1">Cofactor biosynthesis; iron-sulfur cluster biosynthesis.</text>
</comment>
<comment type="subunit">
    <text evidence="1">Homodimer. Interacts with SufE and the SufBCD complex composed of SufB, SufC and SufD. The interaction with SufE is required to mediate the direct transfer of the sulfur atom from the S-sulfanylcysteine.</text>
</comment>
<comment type="subcellular location">
    <subcellularLocation>
        <location evidence="1">Cytoplasm</location>
    </subcellularLocation>
</comment>
<comment type="similarity">
    <text evidence="1">Belongs to the class-V pyridoxal-phosphate-dependent aminotransferase family. Csd subfamily.</text>
</comment>
<protein>
    <recommendedName>
        <fullName evidence="1">Cysteine desulfurase</fullName>
        <ecNumber evidence="1">2.8.1.7</ecNumber>
    </recommendedName>
    <alternativeName>
        <fullName evidence="1">Selenocysteine beta-lyase</fullName>
        <shortName evidence="1">SCL</shortName>
    </alternativeName>
    <alternativeName>
        <fullName evidence="1">Selenocysteine lyase</fullName>
        <ecNumber evidence="1">4.4.1.16</ecNumber>
    </alternativeName>
    <alternativeName>
        <fullName evidence="1">Selenocysteine reductase</fullName>
    </alternativeName>
</protein>
<dbReference type="EC" id="2.8.1.7" evidence="1"/>
<dbReference type="EC" id="4.4.1.16" evidence="1"/>
<dbReference type="EMBL" id="CP000948">
    <property type="protein sequence ID" value="ACB02882.1"/>
    <property type="molecule type" value="Genomic_DNA"/>
</dbReference>
<dbReference type="RefSeq" id="WP_000577988.1">
    <property type="nucleotide sequence ID" value="NC_010473.1"/>
</dbReference>
<dbReference type="SMR" id="B1XFY8"/>
<dbReference type="KEGG" id="ecd:ECDH10B_1814"/>
<dbReference type="HOGENOM" id="CLU_003433_2_5_6"/>
<dbReference type="UniPathway" id="UPA00266"/>
<dbReference type="GO" id="GO:0005737">
    <property type="term" value="C:cytoplasm"/>
    <property type="evidence" value="ECO:0007669"/>
    <property type="project" value="UniProtKB-SubCell"/>
</dbReference>
<dbReference type="GO" id="GO:0031071">
    <property type="term" value="F:cysteine desulfurase activity"/>
    <property type="evidence" value="ECO:0007669"/>
    <property type="project" value="UniProtKB-UniRule"/>
</dbReference>
<dbReference type="GO" id="GO:0030170">
    <property type="term" value="F:pyridoxal phosphate binding"/>
    <property type="evidence" value="ECO:0007669"/>
    <property type="project" value="InterPro"/>
</dbReference>
<dbReference type="GO" id="GO:0009000">
    <property type="term" value="F:selenocysteine lyase activity"/>
    <property type="evidence" value="ECO:0007669"/>
    <property type="project" value="UniProtKB-UniRule"/>
</dbReference>
<dbReference type="GO" id="GO:0006534">
    <property type="term" value="P:cysteine metabolic process"/>
    <property type="evidence" value="ECO:0007669"/>
    <property type="project" value="InterPro"/>
</dbReference>
<dbReference type="CDD" id="cd06453">
    <property type="entry name" value="SufS_like"/>
    <property type="match status" value="1"/>
</dbReference>
<dbReference type="FunFam" id="3.40.640.10:FF:000042">
    <property type="entry name" value="Cysteine desulfurase"/>
    <property type="match status" value="1"/>
</dbReference>
<dbReference type="Gene3D" id="3.90.1150.10">
    <property type="entry name" value="Aspartate Aminotransferase, domain 1"/>
    <property type="match status" value="1"/>
</dbReference>
<dbReference type="Gene3D" id="3.40.640.10">
    <property type="entry name" value="Type I PLP-dependent aspartate aminotransferase-like (Major domain)"/>
    <property type="match status" value="1"/>
</dbReference>
<dbReference type="HAMAP" id="MF_01831">
    <property type="entry name" value="SufS_aminotrans_5"/>
    <property type="match status" value="1"/>
</dbReference>
<dbReference type="InterPro" id="IPR000192">
    <property type="entry name" value="Aminotrans_V_dom"/>
</dbReference>
<dbReference type="InterPro" id="IPR020578">
    <property type="entry name" value="Aminotrans_V_PyrdxlP_BS"/>
</dbReference>
<dbReference type="InterPro" id="IPR010970">
    <property type="entry name" value="Cys_dSase_SufS"/>
</dbReference>
<dbReference type="InterPro" id="IPR015424">
    <property type="entry name" value="PyrdxlP-dep_Trfase"/>
</dbReference>
<dbReference type="InterPro" id="IPR015421">
    <property type="entry name" value="PyrdxlP-dep_Trfase_major"/>
</dbReference>
<dbReference type="InterPro" id="IPR015422">
    <property type="entry name" value="PyrdxlP-dep_Trfase_small"/>
</dbReference>
<dbReference type="NCBIfam" id="NF006791">
    <property type="entry name" value="PRK09295.1"/>
    <property type="match status" value="1"/>
</dbReference>
<dbReference type="NCBIfam" id="TIGR01979">
    <property type="entry name" value="sufS"/>
    <property type="match status" value="1"/>
</dbReference>
<dbReference type="PANTHER" id="PTHR43586">
    <property type="entry name" value="CYSTEINE DESULFURASE"/>
    <property type="match status" value="1"/>
</dbReference>
<dbReference type="PANTHER" id="PTHR43586:SF25">
    <property type="entry name" value="CYSTEINE DESULFURASE"/>
    <property type="match status" value="1"/>
</dbReference>
<dbReference type="Pfam" id="PF00266">
    <property type="entry name" value="Aminotran_5"/>
    <property type="match status" value="1"/>
</dbReference>
<dbReference type="SUPFAM" id="SSF53383">
    <property type="entry name" value="PLP-dependent transferases"/>
    <property type="match status" value="1"/>
</dbReference>
<dbReference type="PROSITE" id="PS00595">
    <property type="entry name" value="AA_TRANSFER_CLASS_5"/>
    <property type="match status" value="1"/>
</dbReference>
<sequence>MIFSVDKVRADFPVLSREVNGLPLAYLDSAASAQKPSQVIDAEAEFYRHGYAAVHRGIHTLSAQATEKMENVRKRASLFINARSAEELVFVRGTTEGINLVANSWGNSNVRAGDNIIISQMEHHANIVPWQMLCARVGAELRVIPLNPDGTLQLETLPTLFDEKTRLLAITHVSNVLGTENPLAEMITLAHQHGAKVLVDGAQAVMHHPVDVQALDCDFYVFSGHKLYGPTGIGILYVKEALLQEMPPWEGGGSMIATVSLSEGTTWTKAPWRFEAGTPNTGGIIGLGAALEYVSALGLNNIAEYEQNLMHYALSQLESVPDLTLYGPQNRLGVIAFNLGKHHAYDVGSFLDNYGIAVRTGHHCAMPLMAYYNVPAMCRASLAMYNTHEEVDRLVTGLQRIHRLLG</sequence>
<keyword id="KW-0963">Cytoplasm</keyword>
<keyword id="KW-0456">Lyase</keyword>
<keyword id="KW-0663">Pyridoxal phosphate</keyword>
<keyword id="KW-0808">Transferase</keyword>
<evidence type="ECO:0000255" key="1">
    <source>
        <dbReference type="HAMAP-Rule" id="MF_01831"/>
    </source>
</evidence>
<reference key="1">
    <citation type="journal article" date="2008" name="J. Bacteriol.">
        <title>The complete genome sequence of Escherichia coli DH10B: insights into the biology of a laboratory workhorse.</title>
        <authorList>
            <person name="Durfee T."/>
            <person name="Nelson R."/>
            <person name="Baldwin S."/>
            <person name="Plunkett G. III"/>
            <person name="Burland V."/>
            <person name="Mau B."/>
            <person name="Petrosino J.F."/>
            <person name="Qin X."/>
            <person name="Muzny D.M."/>
            <person name="Ayele M."/>
            <person name="Gibbs R.A."/>
            <person name="Csorgo B."/>
            <person name="Posfai G."/>
            <person name="Weinstock G.M."/>
            <person name="Blattner F.R."/>
        </authorList>
    </citation>
    <scope>NUCLEOTIDE SEQUENCE [LARGE SCALE GENOMIC DNA]</scope>
    <source>
        <strain>K12 / DH10B</strain>
    </source>
</reference>
<feature type="chain" id="PRO_1000188298" description="Cysteine desulfurase">
    <location>
        <begin position="1"/>
        <end position="406"/>
    </location>
</feature>
<feature type="active site" description="Cysteine persulfide intermediate" evidence="1">
    <location>
        <position position="364"/>
    </location>
</feature>
<feature type="modified residue" description="N6-(pyridoxal phosphate)lysine" evidence="1">
    <location>
        <position position="226"/>
    </location>
</feature>
<name>SUFS_ECODH</name>
<accession>B1XFY8</accession>
<organism>
    <name type="scientific">Escherichia coli (strain K12 / DH10B)</name>
    <dbReference type="NCBI Taxonomy" id="316385"/>
    <lineage>
        <taxon>Bacteria</taxon>
        <taxon>Pseudomonadati</taxon>
        <taxon>Pseudomonadota</taxon>
        <taxon>Gammaproteobacteria</taxon>
        <taxon>Enterobacterales</taxon>
        <taxon>Enterobacteriaceae</taxon>
        <taxon>Escherichia</taxon>
    </lineage>
</organism>
<gene>
    <name evidence="1" type="primary">sufS</name>
    <name type="ordered locus">ECDH10B_1814</name>
</gene>